<sequence>MYCLQWLLPVLLIPKPLNPALWFSHSVFMGFYLLSFLLERKPCTICALVFLGALFLICYSCWGNCFLYHCSASELPEAAYDPAVVGT</sequence>
<proteinExistence type="inferred from homology"/>
<keyword id="KW-0963">Cytoplasm</keyword>
<keyword id="KW-0472">Membrane</keyword>
<keyword id="KW-0539">Nucleus</keyword>
<keyword id="KW-1185">Reference proteome</keyword>
<keyword id="KW-0812">Transmembrane</keyword>
<keyword id="KW-1133">Transmembrane helix</keyword>
<keyword id="KW-0043">Tumor suppressor</keyword>
<evidence type="ECO:0000250" key="1">
    <source>
        <dbReference type="UniProtKB" id="P62952"/>
    </source>
</evidence>
<evidence type="ECO:0000255" key="2"/>
<evidence type="ECO:0000305" key="3"/>
<feature type="chain" id="PRO_0000295137" description="Apoptosis inducing factor BLCAP B">
    <location>
        <begin position="1"/>
        <end position="87"/>
    </location>
</feature>
<feature type="transmembrane region" description="Helical" evidence="2">
    <location>
        <begin position="19"/>
        <end position="39"/>
    </location>
</feature>
<feature type="transmembrane region" description="Helical" evidence="2">
    <location>
        <begin position="43"/>
        <end position="63"/>
    </location>
</feature>
<dbReference type="EMBL" id="BC090248">
    <property type="protein sequence ID" value="AAH90248.1"/>
    <property type="molecule type" value="mRNA"/>
</dbReference>
<dbReference type="RefSeq" id="NP_001165199.1">
    <property type="nucleotide sequence ID" value="NM_001171728.1"/>
</dbReference>
<dbReference type="DNASU" id="734346"/>
<dbReference type="GeneID" id="734346"/>
<dbReference type="KEGG" id="xla:734346"/>
<dbReference type="AGR" id="Xenbase:XB-GENE-964357"/>
<dbReference type="CTD" id="734346"/>
<dbReference type="Xenbase" id="XB-GENE-964357">
    <property type="gene designation" value="blcap.L"/>
</dbReference>
<dbReference type="OrthoDB" id="5772623at2759"/>
<dbReference type="Proteomes" id="UP000186698">
    <property type="component" value="Chromosome 9_10L"/>
</dbReference>
<dbReference type="Bgee" id="734346">
    <property type="expression patterns" value="Expressed in oocyte and 19 other cell types or tissues"/>
</dbReference>
<dbReference type="GO" id="GO:0005737">
    <property type="term" value="C:cytoplasm"/>
    <property type="evidence" value="ECO:0007669"/>
    <property type="project" value="UniProtKB-SubCell"/>
</dbReference>
<dbReference type="GO" id="GO:0016020">
    <property type="term" value="C:membrane"/>
    <property type="evidence" value="ECO:0007669"/>
    <property type="project" value="UniProtKB-SubCell"/>
</dbReference>
<dbReference type="GO" id="GO:0005634">
    <property type="term" value="C:nucleus"/>
    <property type="evidence" value="ECO:0007669"/>
    <property type="project" value="UniProtKB-SubCell"/>
</dbReference>
<dbReference type="InterPro" id="IPR009598">
    <property type="entry name" value="BCALP"/>
</dbReference>
<dbReference type="PANTHER" id="PTHR13259">
    <property type="entry name" value="BLADDER CANCER 10 KD PROTEIN HOMOLOG"/>
    <property type="match status" value="1"/>
</dbReference>
<dbReference type="PANTHER" id="PTHR13259:SF1">
    <property type="entry name" value="BLADDER CANCER-ASSOCIATED PROTEIN"/>
    <property type="match status" value="1"/>
</dbReference>
<dbReference type="Pfam" id="PF06726">
    <property type="entry name" value="BC10"/>
    <property type="match status" value="1"/>
</dbReference>
<dbReference type="SMART" id="SM01396">
    <property type="entry name" value="BC10"/>
    <property type="match status" value="1"/>
</dbReference>
<protein>
    <recommendedName>
        <fullName evidence="3">Apoptosis inducing factor BLCAP B</fullName>
    </recommendedName>
    <alternativeName>
        <fullName>Bladder cancer-associated protein B</fullName>
    </alternativeName>
</protein>
<organism>
    <name type="scientific">Xenopus laevis</name>
    <name type="common">African clawed frog</name>
    <dbReference type="NCBI Taxonomy" id="8355"/>
    <lineage>
        <taxon>Eukaryota</taxon>
        <taxon>Metazoa</taxon>
        <taxon>Chordata</taxon>
        <taxon>Craniata</taxon>
        <taxon>Vertebrata</taxon>
        <taxon>Euteleostomi</taxon>
        <taxon>Amphibia</taxon>
        <taxon>Batrachia</taxon>
        <taxon>Anura</taxon>
        <taxon>Pipoidea</taxon>
        <taxon>Pipidae</taxon>
        <taxon>Xenopodinae</taxon>
        <taxon>Xenopus</taxon>
        <taxon>Xenopus</taxon>
    </lineage>
</organism>
<comment type="function">
    <text evidence="1">Acts as a tumor suppressor; induces growth arrest at G(1)/S checkpoint and apoptosis via RB1-dependent and p53/TP53- and NF-kappa-B-independent mechanisms. Modulates expression of genes involved in the regulation of proliferation, cell cycle and apoptosis.</text>
</comment>
<comment type="subcellular location">
    <subcellularLocation>
        <location evidence="1">Cytoplasm</location>
    </subcellularLocation>
    <subcellularLocation>
        <location evidence="1">Nucleus</location>
    </subcellularLocation>
    <subcellularLocation>
        <location evidence="2">Membrane</location>
        <topology evidence="2">Multi-pass membrane protein</topology>
    </subcellularLocation>
</comment>
<comment type="similarity">
    <text evidence="3">Belongs to the BLCAP family.</text>
</comment>
<gene>
    <name type="primary">blcap-b</name>
</gene>
<accession>Q5EAT6</accession>
<name>BLCAB_XENLA</name>
<reference key="1">
    <citation type="submission" date="2005-02" db="EMBL/GenBank/DDBJ databases">
        <authorList>
            <consortium name="NIH - Xenopus Gene Collection (XGC) project"/>
        </authorList>
    </citation>
    <scope>NUCLEOTIDE SEQUENCE [LARGE SCALE MRNA]</scope>
    <source>
        <tissue>Egg</tissue>
    </source>
</reference>